<keyword id="KW-0903">Direct protein sequencing</keyword>
<keyword id="KW-1015">Disulfide bond</keyword>
<keyword id="KW-0960">Knottin</keyword>
<keyword id="KW-0611">Plant defense</keyword>
<reference key="1">
    <citation type="journal article" date="1999" name="J. Nat. Prod.">
        <title>Seven novel macrocyclic polypeptides from Viola arvensis.</title>
        <authorList>
            <person name="Goeransson U."/>
            <person name="Luijendijk T."/>
            <person name="Johansson S."/>
            <person name="Bohlin L."/>
            <person name="Claeson P."/>
        </authorList>
    </citation>
    <scope>PROTEIN SEQUENCE</scope>
    <scope>MASS SPECTROMETRY</scope>
</reference>
<comment type="function">
    <text>Probably participates in a plant defense mechanism.</text>
</comment>
<comment type="domain">
    <text>The presence of a 'disulfide through disulfide knot' structurally defines this protein as a knottin.</text>
</comment>
<comment type="PTM">
    <text>This is a cyclic peptide.</text>
</comment>
<comment type="mass spectrometry"/>
<comment type="similarity">
    <text evidence="1">Belongs to the cyclotide family. Moebius subfamily.</text>
</comment>
<comment type="caution">
    <text evidence="3">This peptide is cyclic. The start position was chosen by similarity to OAK1 (kalata-B1) for which the DNA sequence is known.</text>
</comment>
<name>VARB_VIOAR</name>
<evidence type="ECO:0000255" key="1">
    <source>
        <dbReference type="PROSITE-ProRule" id="PRU00395"/>
    </source>
</evidence>
<evidence type="ECO:0000269" key="2">
    <source>
    </source>
</evidence>
<evidence type="ECO:0000305" key="3"/>
<sequence>GLPVCGETCFGGTCNTPGCSCDPWPMCSRN</sequence>
<protein>
    <recommendedName>
        <fullName>Varv peptide B</fullName>
    </recommendedName>
</protein>
<proteinExistence type="evidence at protein level"/>
<organism>
    <name type="scientific">Viola arvensis</name>
    <name type="common">European field pansy</name>
    <name type="synonym">Field violet</name>
    <dbReference type="NCBI Taxonomy" id="97415"/>
    <lineage>
        <taxon>Eukaryota</taxon>
        <taxon>Viridiplantae</taxon>
        <taxon>Streptophyta</taxon>
        <taxon>Embryophyta</taxon>
        <taxon>Tracheophyta</taxon>
        <taxon>Spermatophyta</taxon>
        <taxon>Magnoliopsida</taxon>
        <taxon>eudicotyledons</taxon>
        <taxon>Gunneridae</taxon>
        <taxon>Pentapetalae</taxon>
        <taxon>rosids</taxon>
        <taxon>fabids</taxon>
        <taxon>Malpighiales</taxon>
        <taxon>Violaceae</taxon>
        <taxon>Viola</taxon>
        <taxon>Viola subgen. Viola</taxon>
        <taxon>Viola sect. Melanium</taxon>
        <taxon>Viola subsect. Bracteolatae</taxon>
    </lineage>
</organism>
<feature type="peptide" id="PRO_0000043623" description="Varv peptide B">
    <location>
        <begin position="1"/>
        <end position="30"/>
    </location>
</feature>
<feature type="disulfide bond">
    <location>
        <begin position="5"/>
        <end position="19"/>
    </location>
</feature>
<feature type="disulfide bond">
    <location>
        <begin position="9"/>
        <end position="21"/>
    </location>
</feature>
<feature type="disulfide bond">
    <location>
        <begin position="14"/>
        <end position="27"/>
    </location>
</feature>
<feature type="cross-link" description="Cyclopeptide (Gly-Asn)">
    <location>
        <begin position="1"/>
        <end position="30"/>
    </location>
</feature>
<dbReference type="SMR" id="P58447"/>
<dbReference type="GO" id="GO:0006952">
    <property type="term" value="P:defense response"/>
    <property type="evidence" value="ECO:0000250"/>
    <property type="project" value="UniProtKB"/>
</dbReference>
<dbReference type="InterPro" id="IPR005535">
    <property type="entry name" value="Cyclotide"/>
</dbReference>
<dbReference type="InterPro" id="IPR012324">
    <property type="entry name" value="Cyclotide_moebius_CS"/>
</dbReference>
<dbReference type="InterPro" id="IPR036146">
    <property type="entry name" value="Cyclotide_sf"/>
</dbReference>
<dbReference type="Pfam" id="PF03784">
    <property type="entry name" value="Cyclotide"/>
    <property type="match status" value="1"/>
</dbReference>
<dbReference type="PIRSF" id="PIRSF037891">
    <property type="entry name" value="Cycloviolacin"/>
    <property type="match status" value="1"/>
</dbReference>
<dbReference type="SUPFAM" id="SSF57038">
    <property type="entry name" value="Cyclotides"/>
    <property type="match status" value="1"/>
</dbReference>
<dbReference type="PROSITE" id="PS51052">
    <property type="entry name" value="CYCLOTIDE"/>
    <property type="match status" value="1"/>
</dbReference>
<dbReference type="PROSITE" id="PS60009">
    <property type="entry name" value="CYCLOTIDE_MOEBIUS"/>
    <property type="match status" value="1"/>
</dbReference>
<accession>P58447</accession>